<comment type="function">
    <text evidence="1">Catalyzes a reversible aldol reaction between acetaldehyde and D-glyceraldehyde 3-phosphate to generate 2-deoxy-D-ribose 5-phosphate.</text>
</comment>
<comment type="catalytic activity">
    <reaction evidence="1">
        <text>2-deoxy-D-ribose 5-phosphate = D-glyceraldehyde 3-phosphate + acetaldehyde</text>
        <dbReference type="Rhea" id="RHEA:12821"/>
        <dbReference type="ChEBI" id="CHEBI:15343"/>
        <dbReference type="ChEBI" id="CHEBI:59776"/>
        <dbReference type="ChEBI" id="CHEBI:62877"/>
        <dbReference type="EC" id="4.1.2.4"/>
    </reaction>
</comment>
<comment type="pathway">
    <text evidence="1">Carbohydrate degradation; 2-deoxy-D-ribose 1-phosphate degradation; D-glyceraldehyde 3-phosphate and acetaldehyde from 2-deoxy-alpha-D-ribose 1-phosphate: step 2/2.</text>
</comment>
<comment type="subcellular location">
    <subcellularLocation>
        <location evidence="1">Cytoplasm</location>
    </subcellularLocation>
</comment>
<comment type="similarity">
    <text evidence="1">Belongs to the DeoC/FbaB aldolase family. DeoC type 1 subfamily.</text>
</comment>
<proteinExistence type="inferred from homology"/>
<accession>A0PYX5</accession>
<keyword id="KW-0963">Cytoplasm</keyword>
<keyword id="KW-0456">Lyase</keyword>
<keyword id="KW-1185">Reference proteome</keyword>
<keyword id="KW-0704">Schiff base</keyword>
<gene>
    <name evidence="1" type="primary">deoC</name>
    <name type="ordered locus">NT01CX_1496</name>
</gene>
<dbReference type="EC" id="4.1.2.4" evidence="1"/>
<dbReference type="EMBL" id="CP000382">
    <property type="protein sequence ID" value="ABK60834.1"/>
    <property type="molecule type" value="Genomic_DNA"/>
</dbReference>
<dbReference type="RefSeq" id="WP_011721585.1">
    <property type="nucleotide sequence ID" value="NC_008593.1"/>
</dbReference>
<dbReference type="SMR" id="A0PYX5"/>
<dbReference type="STRING" id="386415.NT01CX_1496"/>
<dbReference type="KEGG" id="cno:NT01CX_1496"/>
<dbReference type="eggNOG" id="COG0274">
    <property type="taxonomic scope" value="Bacteria"/>
</dbReference>
<dbReference type="HOGENOM" id="CLU_053595_0_1_9"/>
<dbReference type="UniPathway" id="UPA00002">
    <property type="reaction ID" value="UER00468"/>
</dbReference>
<dbReference type="Proteomes" id="UP000008220">
    <property type="component" value="Chromosome"/>
</dbReference>
<dbReference type="GO" id="GO:0005737">
    <property type="term" value="C:cytoplasm"/>
    <property type="evidence" value="ECO:0007669"/>
    <property type="project" value="UniProtKB-SubCell"/>
</dbReference>
<dbReference type="GO" id="GO:0004139">
    <property type="term" value="F:deoxyribose-phosphate aldolase activity"/>
    <property type="evidence" value="ECO:0007669"/>
    <property type="project" value="UniProtKB-UniRule"/>
</dbReference>
<dbReference type="GO" id="GO:0006018">
    <property type="term" value="P:2-deoxyribose 1-phosphate catabolic process"/>
    <property type="evidence" value="ECO:0007669"/>
    <property type="project" value="UniProtKB-UniRule"/>
</dbReference>
<dbReference type="GO" id="GO:0016052">
    <property type="term" value="P:carbohydrate catabolic process"/>
    <property type="evidence" value="ECO:0007669"/>
    <property type="project" value="TreeGrafter"/>
</dbReference>
<dbReference type="GO" id="GO:0009264">
    <property type="term" value="P:deoxyribonucleotide catabolic process"/>
    <property type="evidence" value="ECO:0007669"/>
    <property type="project" value="InterPro"/>
</dbReference>
<dbReference type="CDD" id="cd00959">
    <property type="entry name" value="DeoC"/>
    <property type="match status" value="1"/>
</dbReference>
<dbReference type="FunFam" id="3.20.20.70:FF:000044">
    <property type="entry name" value="Deoxyribose-phosphate aldolase"/>
    <property type="match status" value="1"/>
</dbReference>
<dbReference type="Gene3D" id="3.20.20.70">
    <property type="entry name" value="Aldolase class I"/>
    <property type="match status" value="1"/>
</dbReference>
<dbReference type="HAMAP" id="MF_00114">
    <property type="entry name" value="DeoC_type1"/>
    <property type="match status" value="1"/>
</dbReference>
<dbReference type="InterPro" id="IPR013785">
    <property type="entry name" value="Aldolase_TIM"/>
</dbReference>
<dbReference type="InterPro" id="IPR011343">
    <property type="entry name" value="DeoC"/>
</dbReference>
<dbReference type="InterPro" id="IPR002915">
    <property type="entry name" value="DeoC/FbaB/LacD_aldolase"/>
</dbReference>
<dbReference type="InterPro" id="IPR028581">
    <property type="entry name" value="DeoC_typeI"/>
</dbReference>
<dbReference type="NCBIfam" id="TIGR00126">
    <property type="entry name" value="deoC"/>
    <property type="match status" value="1"/>
</dbReference>
<dbReference type="PANTHER" id="PTHR10889">
    <property type="entry name" value="DEOXYRIBOSE-PHOSPHATE ALDOLASE"/>
    <property type="match status" value="1"/>
</dbReference>
<dbReference type="PANTHER" id="PTHR10889:SF1">
    <property type="entry name" value="DEOXYRIBOSE-PHOSPHATE ALDOLASE"/>
    <property type="match status" value="1"/>
</dbReference>
<dbReference type="Pfam" id="PF01791">
    <property type="entry name" value="DeoC"/>
    <property type="match status" value="1"/>
</dbReference>
<dbReference type="PIRSF" id="PIRSF001357">
    <property type="entry name" value="DeoC"/>
    <property type="match status" value="1"/>
</dbReference>
<dbReference type="SMART" id="SM01133">
    <property type="entry name" value="DeoC"/>
    <property type="match status" value="1"/>
</dbReference>
<dbReference type="SUPFAM" id="SSF51569">
    <property type="entry name" value="Aldolase"/>
    <property type="match status" value="1"/>
</dbReference>
<feature type="chain" id="PRO_1000015312" description="Deoxyribose-phosphate aldolase">
    <location>
        <begin position="1"/>
        <end position="222"/>
    </location>
</feature>
<feature type="active site" description="Proton donor/acceptor" evidence="1">
    <location>
        <position position="89"/>
    </location>
</feature>
<feature type="active site" description="Schiff-base intermediate with acetaldehyde" evidence="1">
    <location>
        <position position="152"/>
    </location>
</feature>
<feature type="active site" description="Proton donor/acceptor" evidence="1">
    <location>
        <position position="181"/>
    </location>
</feature>
<evidence type="ECO:0000255" key="1">
    <source>
        <dbReference type="HAMAP-Rule" id="MF_00114"/>
    </source>
</evidence>
<sequence length="222" mass="23571">MNLNKYIDHTLLKPQATEEDIKKICKEAKEYNFASVCVNTCYTSLVSKELEGTDVTTCVVVGFPLGATTTETKAFEAKQAIEQGAGEVDMVINVGALKSKKYDYVKKDIEAVVEAAKGKALVKVILENCLLEKEEIVKACELSKEAGADFVKTSTGFSTGGAKVEDVKLMRETVGPDMGVKASGAVRTKEDAEAVIAAGANRIGASSSIAIVEGTKSENAGY</sequence>
<protein>
    <recommendedName>
        <fullName evidence="1">Deoxyribose-phosphate aldolase</fullName>
        <shortName evidence="1">DERA</shortName>
        <ecNumber evidence="1">4.1.2.4</ecNumber>
    </recommendedName>
    <alternativeName>
        <fullName evidence="1">2-deoxy-D-ribose 5-phosphate aldolase</fullName>
    </alternativeName>
    <alternativeName>
        <fullName evidence="1">Phosphodeoxyriboaldolase</fullName>
        <shortName evidence="1">Deoxyriboaldolase</shortName>
    </alternativeName>
</protein>
<reference key="1">
    <citation type="journal article" date="2006" name="Nat. Biotechnol.">
        <title>The genome and transcriptomes of the anti-tumor agent Clostridium novyi-NT.</title>
        <authorList>
            <person name="Bettegowda C."/>
            <person name="Huang X."/>
            <person name="Lin J."/>
            <person name="Cheong I."/>
            <person name="Kohli M."/>
            <person name="Szabo S.A."/>
            <person name="Zhang X."/>
            <person name="Diaz L.A. Jr."/>
            <person name="Velculescu V.E."/>
            <person name="Parmigiani G."/>
            <person name="Kinzler K.W."/>
            <person name="Vogelstein B."/>
            <person name="Zhou S."/>
        </authorList>
    </citation>
    <scope>NUCLEOTIDE SEQUENCE [LARGE SCALE GENOMIC DNA]</scope>
    <source>
        <strain>NT</strain>
    </source>
</reference>
<name>DEOC_CLONN</name>
<organism>
    <name type="scientific">Clostridium novyi (strain NT)</name>
    <dbReference type="NCBI Taxonomy" id="386415"/>
    <lineage>
        <taxon>Bacteria</taxon>
        <taxon>Bacillati</taxon>
        <taxon>Bacillota</taxon>
        <taxon>Clostridia</taxon>
        <taxon>Eubacteriales</taxon>
        <taxon>Clostridiaceae</taxon>
        <taxon>Clostridium</taxon>
    </lineage>
</organism>